<gene>
    <name evidence="1" type="primary">astB</name>
    <name type="ordered locus">BURPS1710b_2842</name>
</gene>
<dbReference type="EC" id="3.5.3.23" evidence="1"/>
<dbReference type="EMBL" id="CP000124">
    <property type="protein sequence ID" value="ABA49014.1"/>
    <property type="molecule type" value="Genomic_DNA"/>
</dbReference>
<dbReference type="RefSeq" id="WP_004192611.1">
    <property type="nucleotide sequence ID" value="NC_007434.1"/>
</dbReference>
<dbReference type="SMR" id="Q3JQC7"/>
<dbReference type="EnsemblBacteria" id="ABA49014">
    <property type="protein sequence ID" value="ABA49014"/>
    <property type="gene ID" value="BURPS1710b_2842"/>
</dbReference>
<dbReference type="GeneID" id="93060961"/>
<dbReference type="KEGG" id="bpm:BURPS1710b_2842"/>
<dbReference type="HOGENOM" id="CLU_053835_0_0_4"/>
<dbReference type="UniPathway" id="UPA00185">
    <property type="reaction ID" value="UER00280"/>
</dbReference>
<dbReference type="Proteomes" id="UP000002700">
    <property type="component" value="Chromosome I"/>
</dbReference>
<dbReference type="GO" id="GO:0009015">
    <property type="term" value="F:N-succinylarginine dihydrolase activity"/>
    <property type="evidence" value="ECO:0007669"/>
    <property type="project" value="UniProtKB-UniRule"/>
</dbReference>
<dbReference type="GO" id="GO:0019544">
    <property type="term" value="P:arginine catabolic process to glutamate"/>
    <property type="evidence" value="ECO:0007669"/>
    <property type="project" value="UniProtKB-UniRule"/>
</dbReference>
<dbReference type="GO" id="GO:0019545">
    <property type="term" value="P:arginine catabolic process to succinate"/>
    <property type="evidence" value="ECO:0007669"/>
    <property type="project" value="UniProtKB-UniRule"/>
</dbReference>
<dbReference type="Gene3D" id="3.75.10.20">
    <property type="entry name" value="Succinylarginine dihydrolase"/>
    <property type="match status" value="1"/>
</dbReference>
<dbReference type="HAMAP" id="MF_01172">
    <property type="entry name" value="AstB"/>
    <property type="match status" value="1"/>
</dbReference>
<dbReference type="InterPro" id="IPR037031">
    <property type="entry name" value="AstB_sf"/>
</dbReference>
<dbReference type="InterPro" id="IPR007079">
    <property type="entry name" value="SuccinylArg_d-Hdrlase_AstB"/>
</dbReference>
<dbReference type="NCBIfam" id="TIGR03241">
    <property type="entry name" value="arg_catab_astB"/>
    <property type="match status" value="1"/>
</dbReference>
<dbReference type="NCBIfam" id="NF009789">
    <property type="entry name" value="PRK13281.1"/>
    <property type="match status" value="1"/>
</dbReference>
<dbReference type="PANTHER" id="PTHR30420">
    <property type="entry name" value="N-SUCCINYLARGININE DIHYDROLASE"/>
    <property type="match status" value="1"/>
</dbReference>
<dbReference type="PANTHER" id="PTHR30420:SF2">
    <property type="entry name" value="N-SUCCINYLARGININE DIHYDROLASE"/>
    <property type="match status" value="1"/>
</dbReference>
<dbReference type="Pfam" id="PF04996">
    <property type="entry name" value="AstB"/>
    <property type="match status" value="1"/>
</dbReference>
<dbReference type="SUPFAM" id="SSF55909">
    <property type="entry name" value="Pentein"/>
    <property type="match status" value="1"/>
</dbReference>
<evidence type="ECO:0000255" key="1">
    <source>
        <dbReference type="HAMAP-Rule" id="MF_01172"/>
    </source>
</evidence>
<sequence length="446" mass="48138">MNAKEANFDGLVGPTHNYAGLSFGNVASLSNEKSDANPKAAAKQGLRKMKQLADLGFAQGVLPPQERPSLRLLRELGFSGKDADVIAKAARQAPELLAAASSASAMWTANAATVSPSADTSDARVHFTPANLCSKLHRAIEHESTRRTLAAIFADEARFAVHDALPGTPALGDEGAANHTRFCAEYGAPGVEFFVYGRAEYRRGPEPTRFPARQTFEASRAVAHRHGLREEATIYAQQRPDVIDAGVFHNDVIAVGNRDTLFCHEHAFVDRQAVYDALAASLGALGAQLNVIEVPDRAVSVADAVGSYLFNSQLLAREDGTQMLVVPQECRENANVAAYLDALVAGNGPIRDVRVFDLRESMKNGGGPACLRLRVVLNDAERAAVKPNVWIGDALFASLDAWIDKHYRDRLSPVDLADPALLDESRTALDELTQILGLGSLYDFQR</sequence>
<accession>Q3JQC7</accession>
<organism>
    <name type="scientific">Burkholderia pseudomallei (strain 1710b)</name>
    <dbReference type="NCBI Taxonomy" id="320372"/>
    <lineage>
        <taxon>Bacteria</taxon>
        <taxon>Pseudomonadati</taxon>
        <taxon>Pseudomonadota</taxon>
        <taxon>Betaproteobacteria</taxon>
        <taxon>Burkholderiales</taxon>
        <taxon>Burkholderiaceae</taxon>
        <taxon>Burkholderia</taxon>
        <taxon>pseudomallei group</taxon>
    </lineage>
</organism>
<feature type="chain" id="PRO_0000262341" description="N-succinylarginine dihydrolase">
    <location>
        <begin position="1"/>
        <end position="446"/>
    </location>
</feature>
<feature type="active site" evidence="1">
    <location>
        <position position="174"/>
    </location>
</feature>
<feature type="active site" evidence="1">
    <location>
        <position position="249"/>
    </location>
</feature>
<feature type="active site" description="Nucleophile" evidence="1">
    <location>
        <position position="370"/>
    </location>
</feature>
<feature type="binding site" evidence="1">
    <location>
        <begin position="19"/>
        <end position="28"/>
    </location>
    <ligand>
        <name>substrate</name>
    </ligand>
</feature>
<feature type="binding site" evidence="1">
    <location>
        <position position="110"/>
    </location>
    <ligand>
        <name>substrate</name>
    </ligand>
</feature>
<feature type="binding site" evidence="1">
    <location>
        <begin position="137"/>
        <end position="138"/>
    </location>
    <ligand>
        <name>substrate</name>
    </ligand>
</feature>
<feature type="binding site" evidence="1">
    <location>
        <position position="213"/>
    </location>
    <ligand>
        <name>substrate</name>
    </ligand>
</feature>
<feature type="binding site" evidence="1">
    <location>
        <position position="251"/>
    </location>
    <ligand>
        <name>substrate</name>
    </ligand>
</feature>
<feature type="binding site" evidence="1">
    <location>
        <position position="364"/>
    </location>
    <ligand>
        <name>substrate</name>
    </ligand>
</feature>
<comment type="function">
    <text evidence="1">Catalyzes the hydrolysis of N(2)-succinylarginine into N(2)-succinylornithine, ammonia and CO(2).</text>
</comment>
<comment type="catalytic activity">
    <reaction evidence="1">
        <text>N(2)-succinyl-L-arginine + 2 H2O + 2 H(+) = N(2)-succinyl-L-ornithine + 2 NH4(+) + CO2</text>
        <dbReference type="Rhea" id="RHEA:19533"/>
        <dbReference type="ChEBI" id="CHEBI:15377"/>
        <dbReference type="ChEBI" id="CHEBI:15378"/>
        <dbReference type="ChEBI" id="CHEBI:16526"/>
        <dbReference type="ChEBI" id="CHEBI:28938"/>
        <dbReference type="ChEBI" id="CHEBI:58241"/>
        <dbReference type="ChEBI" id="CHEBI:58514"/>
        <dbReference type="EC" id="3.5.3.23"/>
    </reaction>
</comment>
<comment type="pathway">
    <text evidence="1">Amino-acid degradation; L-arginine degradation via AST pathway; L-glutamate and succinate from L-arginine: step 2/5.</text>
</comment>
<comment type="subunit">
    <text evidence="1">Homodimer.</text>
</comment>
<comment type="similarity">
    <text evidence="1">Belongs to the succinylarginine dihydrolase family.</text>
</comment>
<protein>
    <recommendedName>
        <fullName evidence="1">N-succinylarginine dihydrolase</fullName>
        <ecNumber evidence="1">3.5.3.23</ecNumber>
    </recommendedName>
</protein>
<reference key="1">
    <citation type="journal article" date="2010" name="Genome Biol. Evol.">
        <title>Continuing evolution of Burkholderia mallei through genome reduction and large-scale rearrangements.</title>
        <authorList>
            <person name="Losada L."/>
            <person name="Ronning C.M."/>
            <person name="DeShazer D."/>
            <person name="Woods D."/>
            <person name="Fedorova N."/>
            <person name="Kim H.S."/>
            <person name="Shabalina S.A."/>
            <person name="Pearson T.R."/>
            <person name="Brinkac L."/>
            <person name="Tan P."/>
            <person name="Nandi T."/>
            <person name="Crabtree J."/>
            <person name="Badger J."/>
            <person name="Beckstrom-Sternberg S."/>
            <person name="Saqib M."/>
            <person name="Schutzer S.E."/>
            <person name="Keim P."/>
            <person name="Nierman W.C."/>
        </authorList>
    </citation>
    <scope>NUCLEOTIDE SEQUENCE [LARGE SCALE GENOMIC DNA]</scope>
    <source>
        <strain>1710b</strain>
    </source>
</reference>
<proteinExistence type="inferred from homology"/>
<keyword id="KW-0056">Arginine metabolism</keyword>
<keyword id="KW-0378">Hydrolase</keyword>
<name>ASTB_BURP1</name>